<evidence type="ECO:0000255" key="1">
    <source>
        <dbReference type="HAMAP-Rule" id="MF_03019"/>
    </source>
</evidence>
<evidence type="ECO:0000305" key="2"/>
<feature type="chain" id="PRO_0000361977" description="3-hydroxyanthranilate 3,4-dioxygenase 2">
    <location>
        <begin position="1"/>
        <end position="188"/>
    </location>
</feature>
<feature type="binding site" evidence="1">
    <location>
        <position position="46"/>
    </location>
    <ligand>
        <name>O2</name>
        <dbReference type="ChEBI" id="CHEBI:15379"/>
    </ligand>
</feature>
<feature type="binding site" evidence="1">
    <location>
        <position position="50"/>
    </location>
    <ligand>
        <name>Fe cation</name>
        <dbReference type="ChEBI" id="CHEBI:24875"/>
        <note>catalytic</note>
    </ligand>
</feature>
<feature type="binding site" evidence="1">
    <location>
        <position position="70"/>
    </location>
    <ligand>
        <name>Fe cation</name>
        <dbReference type="ChEBI" id="CHEBI:24875"/>
        <note>catalytic</note>
    </ligand>
</feature>
<feature type="binding site" evidence="1">
    <location>
        <position position="70"/>
    </location>
    <ligand>
        <name>substrate</name>
    </ligand>
</feature>
<feature type="binding site" evidence="1">
    <location>
        <position position="108"/>
    </location>
    <ligand>
        <name>Fe cation</name>
        <dbReference type="ChEBI" id="CHEBI:24875"/>
        <note>catalytic</note>
    </ligand>
</feature>
<feature type="binding site" evidence="1">
    <location>
        <position position="112"/>
    </location>
    <ligand>
        <name>substrate</name>
    </ligand>
</feature>
<feature type="binding site" evidence="1">
    <location>
        <position position="122"/>
    </location>
    <ligand>
        <name>substrate</name>
    </ligand>
</feature>
<accession>B0XVP0</accession>
<protein>
    <recommendedName>
        <fullName evidence="1">3-hydroxyanthranilate 3,4-dioxygenase 2</fullName>
        <ecNumber evidence="1">1.13.11.6</ecNumber>
    </recommendedName>
    <alternativeName>
        <fullName evidence="1">3-hydroxyanthranilate oxygenase 2</fullName>
        <shortName evidence="1">3-HAO-2</shortName>
    </alternativeName>
    <alternativeName>
        <fullName evidence="1">3-hydroxyanthranilic acid dioxygenase 2</fullName>
        <shortName evidence="1">HAD-2</shortName>
    </alternativeName>
    <alternativeName>
        <fullName evidence="1">Biosynthesis of nicotinic acid protein 1-2</fullName>
    </alternativeName>
</protein>
<sequence length="188" mass="22079">MATLNPLSWVTWLAENEDKLRPPVNNYCLYQGNDFILMAVGGPNERNDYHVNETEVRLQWHQPSETNEQEWFYQVQGDMLLRVIENDTFRDIPIKEGEMFLLPGNTPHNPVRYKDTIGLVMERQRPAESRDRLRWYCTKGNHCSPTIIREEVFHCADLGSQLKPIIERWQQDEESRRCGECGCIADPK</sequence>
<comment type="function">
    <text evidence="1">Catalyzes the oxidative ring opening of 3-hydroxyanthranilate to 2-amino-3-carboxymuconate semialdehyde, which spontaneously cyclizes to quinolinate.</text>
</comment>
<comment type="catalytic activity">
    <reaction evidence="1">
        <text>3-hydroxyanthranilate + O2 = (2Z,4Z)-2-amino-3-carboxymuconate 6-semialdehyde</text>
        <dbReference type="Rhea" id="RHEA:17953"/>
        <dbReference type="ChEBI" id="CHEBI:15379"/>
        <dbReference type="ChEBI" id="CHEBI:36559"/>
        <dbReference type="ChEBI" id="CHEBI:77612"/>
        <dbReference type="EC" id="1.13.11.6"/>
    </reaction>
</comment>
<comment type="cofactor">
    <cofactor evidence="1">
        <name>Fe(2+)</name>
        <dbReference type="ChEBI" id="CHEBI:29033"/>
    </cofactor>
</comment>
<comment type="pathway">
    <text evidence="1">Cofactor biosynthesis; NAD(+) biosynthesis; quinolinate from L-kynurenine: step 3/3.</text>
</comment>
<comment type="subcellular location">
    <subcellularLocation>
        <location evidence="1">Cytoplasm</location>
    </subcellularLocation>
</comment>
<comment type="similarity">
    <text evidence="1">Belongs to the 3-HAO family.</text>
</comment>
<comment type="sequence caution" evidence="2">
    <conflict type="erroneous gene model prediction">
        <sequence resource="EMBL-CDS" id="EDP55248"/>
    </conflict>
</comment>
<comment type="sequence caution" evidence="2">
    <conflict type="erroneous initiation">
        <sequence resource="EMBL-CDS" id="EDP55248"/>
    </conflict>
    <text>Extended N-terminus.</text>
</comment>
<gene>
    <name type="primary">bna1-2</name>
    <name type="ORF">AFUB_033120</name>
</gene>
<dbReference type="EC" id="1.13.11.6" evidence="1"/>
<dbReference type="EMBL" id="DS499595">
    <property type="protein sequence ID" value="EDP55248.1"/>
    <property type="status" value="ALT_SEQ"/>
    <property type="molecule type" value="Genomic_DNA"/>
</dbReference>
<dbReference type="SMR" id="B0XVP0"/>
<dbReference type="OrthoDB" id="15342at5052"/>
<dbReference type="PhylomeDB" id="B0XVP0"/>
<dbReference type="UniPathway" id="UPA00253">
    <property type="reaction ID" value="UER00330"/>
</dbReference>
<dbReference type="Proteomes" id="UP000001699">
    <property type="component" value="Unassembled WGS sequence"/>
</dbReference>
<dbReference type="GO" id="GO:0005737">
    <property type="term" value="C:cytoplasm"/>
    <property type="evidence" value="ECO:0007669"/>
    <property type="project" value="UniProtKB-SubCell"/>
</dbReference>
<dbReference type="GO" id="GO:0000334">
    <property type="term" value="F:3-hydroxyanthranilate 3,4-dioxygenase activity"/>
    <property type="evidence" value="ECO:0007669"/>
    <property type="project" value="UniProtKB-UniRule"/>
</dbReference>
<dbReference type="GO" id="GO:0008198">
    <property type="term" value="F:ferrous iron binding"/>
    <property type="evidence" value="ECO:0007669"/>
    <property type="project" value="UniProtKB-UniRule"/>
</dbReference>
<dbReference type="GO" id="GO:0034354">
    <property type="term" value="P:'de novo' NAD biosynthetic process from L-tryptophan"/>
    <property type="evidence" value="ECO:0007669"/>
    <property type="project" value="UniProtKB-UniRule"/>
</dbReference>
<dbReference type="GO" id="GO:0043420">
    <property type="term" value="P:anthranilate metabolic process"/>
    <property type="evidence" value="ECO:0007669"/>
    <property type="project" value="UniProtKB-UniRule"/>
</dbReference>
<dbReference type="GO" id="GO:0006569">
    <property type="term" value="P:L-tryptophan catabolic process"/>
    <property type="evidence" value="ECO:0007669"/>
    <property type="project" value="UniProtKB-UniRule"/>
</dbReference>
<dbReference type="GO" id="GO:0019805">
    <property type="term" value="P:quinolinate biosynthetic process"/>
    <property type="evidence" value="ECO:0007669"/>
    <property type="project" value="UniProtKB-UniRule"/>
</dbReference>
<dbReference type="CDD" id="cd06123">
    <property type="entry name" value="cupin_HAO"/>
    <property type="match status" value="1"/>
</dbReference>
<dbReference type="FunFam" id="2.60.120.10:FF:000131">
    <property type="entry name" value="3-hydroxyanthranilate 3,4-dioxygenase"/>
    <property type="match status" value="1"/>
</dbReference>
<dbReference type="Gene3D" id="2.60.120.10">
    <property type="entry name" value="Jelly Rolls"/>
    <property type="match status" value="1"/>
</dbReference>
<dbReference type="HAMAP" id="MF_00825">
    <property type="entry name" value="3_HAO"/>
    <property type="match status" value="1"/>
</dbReference>
<dbReference type="InterPro" id="IPR010329">
    <property type="entry name" value="3hydroanth_dOase"/>
</dbReference>
<dbReference type="InterPro" id="IPR014710">
    <property type="entry name" value="RmlC-like_jellyroll"/>
</dbReference>
<dbReference type="InterPro" id="IPR011051">
    <property type="entry name" value="RmlC_Cupin_sf"/>
</dbReference>
<dbReference type="NCBIfam" id="TIGR03037">
    <property type="entry name" value="anthran_nbaC"/>
    <property type="match status" value="1"/>
</dbReference>
<dbReference type="PANTHER" id="PTHR15497">
    <property type="entry name" value="3-HYDROXYANTHRANILATE 3,4-DIOXYGENASE"/>
    <property type="match status" value="1"/>
</dbReference>
<dbReference type="PANTHER" id="PTHR15497:SF3">
    <property type="entry name" value="3-HYDROXYANTHRANILATE 3,4-DIOXYGENASE 2"/>
    <property type="match status" value="1"/>
</dbReference>
<dbReference type="Pfam" id="PF06052">
    <property type="entry name" value="3-HAO"/>
    <property type="match status" value="1"/>
</dbReference>
<dbReference type="SUPFAM" id="SSF51182">
    <property type="entry name" value="RmlC-like cupins"/>
    <property type="match status" value="1"/>
</dbReference>
<name>3HAO2_ASPFC</name>
<keyword id="KW-0963">Cytoplasm</keyword>
<keyword id="KW-0223">Dioxygenase</keyword>
<keyword id="KW-0408">Iron</keyword>
<keyword id="KW-0479">Metal-binding</keyword>
<keyword id="KW-0560">Oxidoreductase</keyword>
<keyword id="KW-0662">Pyridine nucleotide biosynthesis</keyword>
<proteinExistence type="inferred from homology"/>
<organism>
    <name type="scientific">Aspergillus fumigatus (strain CBS 144.89 / FGSC A1163 / CEA10)</name>
    <name type="common">Neosartorya fumigata</name>
    <dbReference type="NCBI Taxonomy" id="451804"/>
    <lineage>
        <taxon>Eukaryota</taxon>
        <taxon>Fungi</taxon>
        <taxon>Dikarya</taxon>
        <taxon>Ascomycota</taxon>
        <taxon>Pezizomycotina</taxon>
        <taxon>Eurotiomycetes</taxon>
        <taxon>Eurotiomycetidae</taxon>
        <taxon>Eurotiales</taxon>
        <taxon>Aspergillaceae</taxon>
        <taxon>Aspergillus</taxon>
        <taxon>Aspergillus subgen. Fumigati</taxon>
    </lineage>
</organism>
<reference key="1">
    <citation type="journal article" date="2008" name="PLoS Genet.">
        <title>Genomic islands in the pathogenic filamentous fungus Aspergillus fumigatus.</title>
        <authorList>
            <person name="Fedorova N.D."/>
            <person name="Khaldi N."/>
            <person name="Joardar V.S."/>
            <person name="Maiti R."/>
            <person name="Amedeo P."/>
            <person name="Anderson M.J."/>
            <person name="Crabtree J."/>
            <person name="Silva J.C."/>
            <person name="Badger J.H."/>
            <person name="Albarraq A."/>
            <person name="Angiuoli S."/>
            <person name="Bussey H."/>
            <person name="Bowyer P."/>
            <person name="Cotty P.J."/>
            <person name="Dyer P.S."/>
            <person name="Egan A."/>
            <person name="Galens K."/>
            <person name="Fraser-Liggett C.M."/>
            <person name="Haas B.J."/>
            <person name="Inman J.M."/>
            <person name="Kent R."/>
            <person name="Lemieux S."/>
            <person name="Malavazi I."/>
            <person name="Orvis J."/>
            <person name="Roemer T."/>
            <person name="Ronning C.M."/>
            <person name="Sundaram J.P."/>
            <person name="Sutton G."/>
            <person name="Turner G."/>
            <person name="Venter J.C."/>
            <person name="White O.R."/>
            <person name="Whitty B.R."/>
            <person name="Youngman P."/>
            <person name="Wolfe K.H."/>
            <person name="Goldman G.H."/>
            <person name="Wortman J.R."/>
            <person name="Jiang B."/>
            <person name="Denning D.W."/>
            <person name="Nierman W.C."/>
        </authorList>
    </citation>
    <scope>NUCLEOTIDE SEQUENCE [LARGE SCALE GENOMIC DNA]</scope>
    <source>
        <strain>CBS 144.89 / FGSC A1163 / CEA10</strain>
    </source>
</reference>